<evidence type="ECO:0000250" key="1"/>
<evidence type="ECO:0000305" key="2"/>
<gene>
    <name type="primary">pfdn1</name>
    <name type="ORF">GSTENG00014661001</name>
</gene>
<name>PFD1_TETNG</name>
<reference key="1">
    <citation type="journal article" date="2004" name="Nature">
        <title>Genome duplication in the teleost fish Tetraodon nigroviridis reveals the early vertebrate proto-karyotype.</title>
        <authorList>
            <person name="Jaillon O."/>
            <person name="Aury J.-M."/>
            <person name="Brunet F."/>
            <person name="Petit J.-L."/>
            <person name="Stange-Thomann N."/>
            <person name="Mauceli E."/>
            <person name="Bouneau L."/>
            <person name="Fischer C."/>
            <person name="Ozouf-Costaz C."/>
            <person name="Bernot A."/>
            <person name="Nicaud S."/>
            <person name="Jaffe D."/>
            <person name="Fisher S."/>
            <person name="Lutfalla G."/>
            <person name="Dossat C."/>
            <person name="Segurens B."/>
            <person name="Dasilva C."/>
            <person name="Salanoubat M."/>
            <person name="Levy M."/>
            <person name="Boudet N."/>
            <person name="Castellano S."/>
            <person name="Anthouard V."/>
            <person name="Jubin C."/>
            <person name="Castelli V."/>
            <person name="Katinka M."/>
            <person name="Vacherie B."/>
            <person name="Biemont C."/>
            <person name="Skalli Z."/>
            <person name="Cattolico L."/>
            <person name="Poulain J."/>
            <person name="De Berardinis V."/>
            <person name="Cruaud C."/>
            <person name="Duprat S."/>
            <person name="Brottier P."/>
            <person name="Coutanceau J.-P."/>
            <person name="Gouzy J."/>
            <person name="Parra G."/>
            <person name="Lardier G."/>
            <person name="Chapple C."/>
            <person name="McKernan K.J."/>
            <person name="McEwan P."/>
            <person name="Bosak S."/>
            <person name="Kellis M."/>
            <person name="Volff J.-N."/>
            <person name="Guigo R."/>
            <person name="Zody M.C."/>
            <person name="Mesirov J."/>
            <person name="Lindblad-Toh K."/>
            <person name="Birren B."/>
            <person name="Nusbaum C."/>
            <person name="Kahn D."/>
            <person name="Robinson-Rechavi M."/>
            <person name="Laudet V."/>
            <person name="Schachter V."/>
            <person name="Quetier F."/>
            <person name="Saurin W."/>
            <person name="Scarpelli C."/>
            <person name="Wincker P."/>
            <person name="Lander E.S."/>
            <person name="Weissenbach J."/>
            <person name="Roest Crollius H."/>
        </authorList>
    </citation>
    <scope>NUCLEOTIDE SEQUENCE [LARGE SCALE GENOMIC DNA]</scope>
</reference>
<feature type="chain" id="PRO_0000232448" description="Prefoldin subunit 1">
    <location>
        <begin position="1"/>
        <end position="122"/>
    </location>
</feature>
<accession>Q4SPU8</accession>
<comment type="function">
    <text evidence="1">Binds specifically to cytosolic chaperonin (c-CPN) and transfers target proteins to it. Binds to nascent polypeptide chain and promotes folding in an environment in which there are many competing pathways for nonnative proteins (By similarity).</text>
</comment>
<comment type="subunit">
    <text evidence="1">Heterohexamer of two PFD-alpha type and four PFD-beta type subunits.</text>
</comment>
<comment type="similarity">
    <text evidence="2">Belongs to the prefoldin subunit beta family.</text>
</comment>
<sequence>MAATIDEELKKAFTELQAKVIDTQQKARLADLQIDQLTKVQKHARLTQTEMASLPDNTRLYEGVGRMFILRSKEEINNHLTDAQKTADEKVKELEQKKVYLERSVKEAEDNIREMLMARRAQ</sequence>
<protein>
    <recommendedName>
        <fullName>Prefoldin subunit 1</fullName>
    </recommendedName>
</protein>
<organism>
    <name type="scientific">Tetraodon nigroviridis</name>
    <name type="common">Spotted green pufferfish</name>
    <name type="synonym">Chelonodon nigroviridis</name>
    <dbReference type="NCBI Taxonomy" id="99883"/>
    <lineage>
        <taxon>Eukaryota</taxon>
        <taxon>Metazoa</taxon>
        <taxon>Chordata</taxon>
        <taxon>Craniata</taxon>
        <taxon>Vertebrata</taxon>
        <taxon>Euteleostomi</taxon>
        <taxon>Actinopterygii</taxon>
        <taxon>Neopterygii</taxon>
        <taxon>Teleostei</taxon>
        <taxon>Neoteleostei</taxon>
        <taxon>Acanthomorphata</taxon>
        <taxon>Eupercaria</taxon>
        <taxon>Tetraodontiformes</taxon>
        <taxon>Tetradontoidea</taxon>
        <taxon>Tetraodontidae</taxon>
        <taxon>Tetraodon</taxon>
    </lineage>
</organism>
<dbReference type="EMBL" id="CAAE01014536">
    <property type="protein sequence ID" value="CAF97334.1"/>
    <property type="molecule type" value="Genomic_DNA"/>
</dbReference>
<dbReference type="SMR" id="Q4SPU8"/>
<dbReference type="FunCoup" id="Q4SPU8">
    <property type="interactions" value="1906"/>
</dbReference>
<dbReference type="STRING" id="99883.ENSTNIP00000010477"/>
<dbReference type="KEGG" id="tng:GSTEN00014661G001"/>
<dbReference type="HOGENOM" id="CLU_122140_2_0_1"/>
<dbReference type="InParanoid" id="Q4SPU8"/>
<dbReference type="OrthoDB" id="5242628at2759"/>
<dbReference type="Proteomes" id="UP000007303">
    <property type="component" value="Unassembled WGS sequence"/>
</dbReference>
<dbReference type="GO" id="GO:0005737">
    <property type="term" value="C:cytoplasm"/>
    <property type="evidence" value="ECO:0007669"/>
    <property type="project" value="TreeGrafter"/>
</dbReference>
<dbReference type="GO" id="GO:0016272">
    <property type="term" value="C:prefoldin complex"/>
    <property type="evidence" value="ECO:0007669"/>
    <property type="project" value="InterPro"/>
</dbReference>
<dbReference type="GO" id="GO:0044183">
    <property type="term" value="F:protein folding chaperone"/>
    <property type="evidence" value="ECO:0007669"/>
    <property type="project" value="TreeGrafter"/>
</dbReference>
<dbReference type="GO" id="GO:0051082">
    <property type="term" value="F:unfolded protein binding"/>
    <property type="evidence" value="ECO:0007669"/>
    <property type="project" value="InterPro"/>
</dbReference>
<dbReference type="CDD" id="cd23164">
    <property type="entry name" value="Prefoldin_1"/>
    <property type="match status" value="1"/>
</dbReference>
<dbReference type="Gene3D" id="1.10.287.370">
    <property type="match status" value="1"/>
</dbReference>
<dbReference type="InterPro" id="IPR002777">
    <property type="entry name" value="PFD_beta-like"/>
</dbReference>
<dbReference type="InterPro" id="IPR009053">
    <property type="entry name" value="Prefoldin"/>
</dbReference>
<dbReference type="PANTHER" id="PTHR20903:SF0">
    <property type="entry name" value="PREFOLDIN SUBUNIT 1"/>
    <property type="match status" value="1"/>
</dbReference>
<dbReference type="PANTHER" id="PTHR20903">
    <property type="entry name" value="PREFOLDIN SUBUNIT 1-RELATED"/>
    <property type="match status" value="1"/>
</dbReference>
<dbReference type="Pfam" id="PF01920">
    <property type="entry name" value="Prefoldin_2"/>
    <property type="match status" value="1"/>
</dbReference>
<dbReference type="SUPFAM" id="SSF46579">
    <property type="entry name" value="Prefoldin"/>
    <property type="match status" value="1"/>
</dbReference>
<proteinExistence type="inferred from homology"/>
<keyword id="KW-0143">Chaperone</keyword>
<keyword id="KW-1185">Reference proteome</keyword>